<protein>
    <recommendedName>
        <fullName evidence="4">Rho family-interacting cell polarization regulator 2</fullName>
    </recommendedName>
    <alternativeName>
        <fullName>Myogenesis-related and NCAM-associated protein</fullName>
    </alternativeName>
</protein>
<keyword id="KW-0130">Cell adhesion</keyword>
<keyword id="KW-1003">Cell membrane</keyword>
<keyword id="KW-0966">Cell projection</keyword>
<keyword id="KW-0145">Chemotaxis</keyword>
<keyword id="KW-0175">Coiled coil</keyword>
<keyword id="KW-0963">Cytoplasm</keyword>
<keyword id="KW-0206">Cytoskeleton</keyword>
<keyword id="KW-0221">Differentiation</keyword>
<keyword id="KW-1009">Hearing</keyword>
<keyword id="KW-0472">Membrane</keyword>
<keyword id="KW-0517">Myogenesis</keyword>
<keyword id="KW-1185">Reference proteome</keyword>
<keyword id="KW-0734">Signal transduction inhibitor</keyword>
<gene>
    <name evidence="4" type="primary">RIPOR2</name>
    <name type="synonym">FAM65B</name>
    <name type="synonym">MYONAP</name>
    <name type="ORF">RCJMB04_13m20</name>
</gene>
<reference key="1">
    <citation type="journal article" date="2005" name="Genome Biol.">
        <title>Full-length cDNAs from chicken bursal lymphocytes to facilitate gene function analysis.</title>
        <authorList>
            <person name="Caldwell R.B."/>
            <person name="Kierzek A.M."/>
            <person name="Arakawa H."/>
            <person name="Bezzubov Y."/>
            <person name="Zaim J."/>
            <person name="Fiedler P."/>
            <person name="Kutter S."/>
            <person name="Blagodatski A."/>
            <person name="Kostovska D."/>
            <person name="Koter M."/>
            <person name="Plachy J."/>
            <person name="Carninci P."/>
            <person name="Hayashizaki Y."/>
            <person name="Buerstedde J.-M."/>
        </authorList>
    </citation>
    <scope>NUCLEOTIDE SEQUENCE [LARGE SCALE MRNA]</scope>
    <source>
        <strain>CB</strain>
        <tissue>Bursa of Fabricius</tissue>
    </source>
</reference>
<feature type="chain" id="PRO_0000345985" description="Rho family-interacting cell polarization regulator 2">
    <location>
        <begin position="1"/>
        <end position="602"/>
    </location>
</feature>
<feature type="region of interest" description="Disordered" evidence="6">
    <location>
        <begin position="46"/>
        <end position="73"/>
    </location>
</feature>
<feature type="region of interest" description="Necessary for interaction with NCAM and myoblast protrusion formation" evidence="1">
    <location>
        <begin position="173"/>
        <end position="421"/>
    </location>
</feature>
<feature type="region of interest" description="Disordered" evidence="6">
    <location>
        <begin position="384"/>
        <end position="474"/>
    </location>
</feature>
<feature type="coiled-coil region" evidence="5">
    <location>
        <begin position="83"/>
        <end position="112"/>
    </location>
</feature>
<feature type="compositionally biased region" description="Basic residues" evidence="6">
    <location>
        <begin position="48"/>
        <end position="59"/>
    </location>
</feature>
<feature type="compositionally biased region" description="Polar residues" evidence="6">
    <location>
        <begin position="403"/>
        <end position="416"/>
    </location>
</feature>
<feature type="compositionally biased region" description="Low complexity" evidence="6">
    <location>
        <begin position="423"/>
        <end position="437"/>
    </location>
</feature>
<comment type="function">
    <text evidence="1 3 4">Acts as an inhibitor of the small GTPase RHOA and plays several roles in the regulation of myoblast and hair cell differentiation, lymphocyte T proliferation and neutrophil polarization. Plays a role in fetal mononuclear myoblast differentiation by promoting filopodia and myotube formation. Maintains naive T lymphocytes in a quiescent state and prevents chemokine-induced T lymphocyte responses, such as cell adhesion, polarization and migration. Involved also in the regulation of neutrophil polarization, chemotaxis and adhesion. Required for normal development of inner and outer hair cell stereocilia within the cochlea of the inner ear. Plays a role for maintaining the structural organization of the basal domain of stereocilia. Involved in mechanosensory hair cell function. Required for normal hearing.</text>
</comment>
<comment type="subunit">
    <text evidence="1 3">Homooligomer; homooligomerization is regulated by RHOC and leads to the formation of concatemers through the association of N- and C-termini. Interacts with NCAM.</text>
</comment>
<comment type="subcellular location">
    <subcellularLocation>
        <location evidence="4">Cytoplasm</location>
    </subcellularLocation>
    <subcellularLocation>
        <location evidence="4">Cytoplasm</location>
        <location evidence="4">Cytoskeleton</location>
    </subcellularLocation>
    <subcellularLocation>
        <location evidence="4">Cell projection</location>
        <location evidence="4">Filopodium</location>
    </subcellularLocation>
    <subcellularLocation>
        <location evidence="2">Apical cell membrane</location>
    </subcellularLocation>
    <subcellularLocation>
        <location evidence="3">Cell projection</location>
        <location evidence="3">Stereocilium</location>
    </subcellularLocation>
    <subcellularLocation>
        <location evidence="2">Cell projection</location>
        <location evidence="2">Stereocilium membrane</location>
    </subcellularLocation>
</comment>
<comment type="similarity">
    <text evidence="7">Belongs to the RIPOR family.</text>
</comment>
<organism>
    <name type="scientific">Gallus gallus</name>
    <name type="common">Chicken</name>
    <dbReference type="NCBI Taxonomy" id="9031"/>
    <lineage>
        <taxon>Eukaryota</taxon>
        <taxon>Metazoa</taxon>
        <taxon>Chordata</taxon>
        <taxon>Craniata</taxon>
        <taxon>Vertebrata</taxon>
        <taxon>Euteleostomi</taxon>
        <taxon>Archelosauria</taxon>
        <taxon>Archosauria</taxon>
        <taxon>Dinosauria</taxon>
        <taxon>Saurischia</taxon>
        <taxon>Theropoda</taxon>
        <taxon>Coelurosauria</taxon>
        <taxon>Aves</taxon>
        <taxon>Neognathae</taxon>
        <taxon>Galloanserae</taxon>
        <taxon>Galliformes</taxon>
        <taxon>Phasianidae</taxon>
        <taxon>Phasianinae</taxon>
        <taxon>Gallus</taxon>
    </lineage>
</organism>
<accession>Q5F3L9</accession>
<evidence type="ECO:0000250" key="1">
    <source>
        <dbReference type="UniProtKB" id="A9ZLX4"/>
    </source>
</evidence>
<evidence type="ECO:0000250" key="2">
    <source>
        <dbReference type="UniProtKB" id="Q7TP54"/>
    </source>
</evidence>
<evidence type="ECO:0000250" key="3">
    <source>
        <dbReference type="UniProtKB" id="Q80U16"/>
    </source>
</evidence>
<evidence type="ECO:0000250" key="4">
    <source>
        <dbReference type="UniProtKB" id="Q9Y4F9"/>
    </source>
</evidence>
<evidence type="ECO:0000255" key="5"/>
<evidence type="ECO:0000256" key="6">
    <source>
        <dbReference type="SAM" id="MobiDB-lite"/>
    </source>
</evidence>
<evidence type="ECO:0000305" key="7"/>
<sequence>MSIGSHSFSPGGPNGIIRSQSFAGFSGLQERRSRCNSFIENSSALKKPQAKVKKMHNLGHKNSTTPKEPQPKRMEEVYRALKNGLDEYLEVHQTELDKLTAQLKDMRRNSRLGVLYDLDKQIKAVERYMRRLEFHISKVDELYEAYCIQRRLCDGASKMKQAFAMSPASKAARESLTEINRSYKEYTENMCTIEAELENLLGEFCIKMKGLAGFARLCPGDQYEIFMRYGRQRWKLKGKIEVNGKQSWDGEEMVFLPLIVGLISIKVTEVKGLATHILVGSVTCETKDLFAARPQVVAVDINDLGTIKLNLEITWYPFDVEDLTPSTANVSKASALQRRMSMYSQGTPETPTFKDHSFFSNLPDDVFENGTAATEKRPLSFTFGDLPYEDRVPPANPAEPSSAHVSSSPDITTAATQHRALKSSESSSPDCSSSDSCGDAVPEPKDLPSPGEAVVTGNKVTPRARSEVCQKPSNAGSDRVFIEANVPVSLLQDTDEGSELKPVELDTYEGNITKQLVKRLTSAEVPGTPERLPCEGSISGESEGYKSYLDGSIEEALQGLLLALEPHKEQYKEFQDLDQEVMHLDDILKVSTFSESTTLKDI</sequence>
<dbReference type="EMBL" id="AJ851631">
    <property type="protein sequence ID" value="CAH65265.1"/>
    <property type="molecule type" value="mRNA"/>
</dbReference>
<dbReference type="RefSeq" id="NP_001012883.1">
    <property type="nucleotide sequence ID" value="NM_001012865.1"/>
</dbReference>
<dbReference type="SMR" id="Q5F3L9"/>
<dbReference type="STRING" id="9031.ENSGALP00000044825"/>
<dbReference type="PaxDb" id="9031-ENSGALP00000022126"/>
<dbReference type="GeneID" id="421003"/>
<dbReference type="KEGG" id="gga:421003"/>
<dbReference type="CTD" id="421003"/>
<dbReference type="VEuPathDB" id="HostDB:geneid_421003"/>
<dbReference type="eggNOG" id="ENOG502QQ7T">
    <property type="taxonomic scope" value="Eukaryota"/>
</dbReference>
<dbReference type="InParanoid" id="Q5F3L9"/>
<dbReference type="OrthoDB" id="9999654at2759"/>
<dbReference type="PhylomeDB" id="Q5F3L9"/>
<dbReference type="PRO" id="PR:Q5F3L9"/>
<dbReference type="Proteomes" id="UP000000539">
    <property type="component" value="Unassembled WGS sequence"/>
</dbReference>
<dbReference type="GO" id="GO:0016324">
    <property type="term" value="C:apical plasma membrane"/>
    <property type="evidence" value="ECO:0007669"/>
    <property type="project" value="UniProtKB-SubCell"/>
</dbReference>
<dbReference type="GO" id="GO:0005737">
    <property type="term" value="C:cytoplasm"/>
    <property type="evidence" value="ECO:0000250"/>
    <property type="project" value="UniProtKB"/>
</dbReference>
<dbReference type="GO" id="GO:0005856">
    <property type="term" value="C:cytoskeleton"/>
    <property type="evidence" value="ECO:0000250"/>
    <property type="project" value="UniProtKB"/>
</dbReference>
<dbReference type="GO" id="GO:0030175">
    <property type="term" value="C:filopodium"/>
    <property type="evidence" value="ECO:0000250"/>
    <property type="project" value="UniProtKB"/>
</dbReference>
<dbReference type="GO" id="GO:0032420">
    <property type="term" value="C:stereocilium"/>
    <property type="evidence" value="ECO:0000250"/>
    <property type="project" value="UniProtKB"/>
</dbReference>
<dbReference type="GO" id="GO:0060171">
    <property type="term" value="C:stereocilium membrane"/>
    <property type="evidence" value="ECO:0007669"/>
    <property type="project" value="UniProtKB-SubCell"/>
</dbReference>
<dbReference type="GO" id="GO:0071889">
    <property type="term" value="F:14-3-3 protein binding"/>
    <property type="evidence" value="ECO:0000250"/>
    <property type="project" value="UniProtKB"/>
</dbReference>
<dbReference type="GO" id="GO:0007155">
    <property type="term" value="P:cell adhesion"/>
    <property type="evidence" value="ECO:0007669"/>
    <property type="project" value="UniProtKB-KW"/>
</dbReference>
<dbReference type="GO" id="GO:0030154">
    <property type="term" value="P:cell differentiation"/>
    <property type="evidence" value="ECO:0007669"/>
    <property type="project" value="UniProtKB-KW"/>
</dbReference>
<dbReference type="GO" id="GO:1990869">
    <property type="term" value="P:cellular response to chemokine"/>
    <property type="evidence" value="ECO:0000250"/>
    <property type="project" value="UniProtKB"/>
</dbReference>
<dbReference type="GO" id="GO:0006935">
    <property type="term" value="P:chemotaxis"/>
    <property type="evidence" value="ECO:0007669"/>
    <property type="project" value="UniProtKB-KW"/>
</dbReference>
<dbReference type="GO" id="GO:0007517">
    <property type="term" value="P:muscle organ development"/>
    <property type="evidence" value="ECO:0007669"/>
    <property type="project" value="UniProtKB-KW"/>
</dbReference>
<dbReference type="GO" id="GO:0007162">
    <property type="term" value="P:negative regulation of cell adhesion"/>
    <property type="evidence" value="ECO:0000250"/>
    <property type="project" value="UniProtKB"/>
</dbReference>
<dbReference type="GO" id="GO:1903904">
    <property type="term" value="P:negative regulation of establishment of T cell polarity"/>
    <property type="evidence" value="ECO:0000250"/>
    <property type="project" value="UniProtKB"/>
</dbReference>
<dbReference type="GO" id="GO:1905872">
    <property type="term" value="P:negative regulation of protein localization to cell leading edge"/>
    <property type="evidence" value="ECO:0000250"/>
    <property type="project" value="UniProtKB"/>
</dbReference>
<dbReference type="GO" id="GO:2001107">
    <property type="term" value="P:negative regulation of Rho guanyl-nucleotide exchange factor activity"/>
    <property type="evidence" value="ECO:0000250"/>
    <property type="project" value="UniProtKB"/>
</dbReference>
<dbReference type="GO" id="GO:0035024">
    <property type="term" value="P:negative regulation of Rho protein signal transduction"/>
    <property type="evidence" value="ECO:0000250"/>
    <property type="project" value="UniProtKB"/>
</dbReference>
<dbReference type="GO" id="GO:2000405">
    <property type="term" value="P:negative regulation of T cell migration"/>
    <property type="evidence" value="ECO:0000250"/>
    <property type="project" value="UniProtKB"/>
</dbReference>
<dbReference type="GO" id="GO:0051491">
    <property type="term" value="P:positive regulation of filopodium assembly"/>
    <property type="evidence" value="ECO:0000250"/>
    <property type="project" value="UniProtKB"/>
</dbReference>
<dbReference type="GO" id="GO:0045663">
    <property type="term" value="P:positive regulation of myoblast differentiation"/>
    <property type="evidence" value="ECO:0000250"/>
    <property type="project" value="UniProtKB"/>
</dbReference>
<dbReference type="GO" id="GO:1901741">
    <property type="term" value="P:positive regulation of myoblast fusion"/>
    <property type="evidence" value="ECO:0000250"/>
    <property type="project" value="UniProtKB"/>
</dbReference>
<dbReference type="GO" id="GO:0090023">
    <property type="term" value="P:positive regulation of neutrophil chemotaxis"/>
    <property type="evidence" value="ECO:0000250"/>
    <property type="project" value="UniProtKB"/>
</dbReference>
<dbReference type="GO" id="GO:2000391">
    <property type="term" value="P:positive regulation of neutrophil extravasation"/>
    <property type="evidence" value="ECO:0000250"/>
    <property type="project" value="UniProtKB"/>
</dbReference>
<dbReference type="GO" id="GO:2000114">
    <property type="term" value="P:regulation of establishment of cell polarity"/>
    <property type="evidence" value="ECO:0000250"/>
    <property type="project" value="UniProtKB"/>
</dbReference>
<dbReference type="GO" id="GO:0007605">
    <property type="term" value="P:sensory perception of sound"/>
    <property type="evidence" value="ECO:0000250"/>
    <property type="project" value="UniProtKB"/>
</dbReference>
<dbReference type="InterPro" id="IPR031780">
    <property type="entry name" value="FAM65_N"/>
</dbReference>
<dbReference type="InterPro" id="IPR026136">
    <property type="entry name" value="RIPOR3"/>
</dbReference>
<dbReference type="PANTHER" id="PTHR15829">
    <property type="entry name" value="PROTEIN KINASE PKN/PRK1, EFFECTOR"/>
    <property type="match status" value="1"/>
</dbReference>
<dbReference type="PANTHER" id="PTHR15829:SF2">
    <property type="entry name" value="RHO FAMILY-INTERACTING CELL POLARIZATION REGULATOR 2"/>
    <property type="match status" value="1"/>
</dbReference>
<dbReference type="Pfam" id="PF15903">
    <property type="entry name" value="PL48"/>
    <property type="match status" value="1"/>
</dbReference>
<proteinExistence type="evidence at transcript level"/>
<name>RIPR2_CHICK</name>